<accession>B7MFC2</accession>
<comment type="function">
    <text evidence="1">General inhibitor of pancreatic serine proteases: inhibits chymotrypsin, trypsin, elastases, factor X, kallikrein as well as a variety of other proteases.</text>
</comment>
<comment type="subunit">
    <text evidence="1">Homodimer.</text>
</comment>
<comment type="subcellular location">
    <subcellularLocation>
        <location evidence="1">Periplasm</location>
    </subcellularLocation>
</comment>
<comment type="similarity">
    <text evidence="1">Belongs to the protease inhibitor I11 (ecotin) family.</text>
</comment>
<gene>
    <name evidence="1" type="primary">eco</name>
    <name type="ordered locus">ECS88_2357</name>
</gene>
<feature type="signal peptide" evidence="1">
    <location>
        <begin position="1"/>
        <end position="20"/>
    </location>
</feature>
<feature type="chain" id="PRO_1000132355" description="Ecotin">
    <location>
        <begin position="21"/>
        <end position="162"/>
    </location>
</feature>
<feature type="site" description="Reactive bond" evidence="1">
    <location>
        <begin position="104"/>
        <end position="105"/>
    </location>
</feature>
<feature type="disulfide bond" evidence="1">
    <location>
        <begin position="70"/>
        <end position="107"/>
    </location>
</feature>
<keyword id="KW-1015">Disulfide bond</keyword>
<keyword id="KW-0574">Periplasm</keyword>
<keyword id="KW-0646">Protease inhibitor</keyword>
<keyword id="KW-1185">Reference proteome</keyword>
<keyword id="KW-0722">Serine protease inhibitor</keyword>
<keyword id="KW-0732">Signal</keyword>
<name>ECOT_ECO45</name>
<organism>
    <name type="scientific">Escherichia coli O45:K1 (strain S88 / ExPEC)</name>
    <dbReference type="NCBI Taxonomy" id="585035"/>
    <lineage>
        <taxon>Bacteria</taxon>
        <taxon>Pseudomonadati</taxon>
        <taxon>Pseudomonadota</taxon>
        <taxon>Gammaproteobacteria</taxon>
        <taxon>Enterobacterales</taxon>
        <taxon>Enterobacteriaceae</taxon>
        <taxon>Escherichia</taxon>
    </lineage>
</organism>
<dbReference type="EMBL" id="CU928161">
    <property type="protein sequence ID" value="CAR03638.1"/>
    <property type="molecule type" value="Genomic_DNA"/>
</dbReference>
<dbReference type="SMR" id="B7MFC2"/>
<dbReference type="MEROPS" id="I11.001"/>
<dbReference type="KEGG" id="ecz:ECS88_2357"/>
<dbReference type="HOGENOM" id="CLU_111565_0_0_6"/>
<dbReference type="Proteomes" id="UP000000747">
    <property type="component" value="Chromosome"/>
</dbReference>
<dbReference type="GO" id="GO:0042597">
    <property type="term" value="C:periplasmic space"/>
    <property type="evidence" value="ECO:0007669"/>
    <property type="project" value="UniProtKB-SubCell"/>
</dbReference>
<dbReference type="GO" id="GO:0004867">
    <property type="term" value="F:serine-type endopeptidase inhibitor activity"/>
    <property type="evidence" value="ECO:0007669"/>
    <property type="project" value="UniProtKB-UniRule"/>
</dbReference>
<dbReference type="CDD" id="cd00242">
    <property type="entry name" value="Ecotin"/>
    <property type="match status" value="1"/>
</dbReference>
<dbReference type="FunFam" id="2.60.40.550:FF:000001">
    <property type="entry name" value="Ecotin"/>
    <property type="match status" value="1"/>
</dbReference>
<dbReference type="FunFam" id="4.10.1230.10:FF:000001">
    <property type="entry name" value="Ecotin"/>
    <property type="match status" value="1"/>
</dbReference>
<dbReference type="Gene3D" id="2.60.40.550">
    <property type="entry name" value="Ecotin"/>
    <property type="match status" value="1"/>
</dbReference>
<dbReference type="Gene3D" id="4.10.1230.10">
    <property type="entry name" value="Ecotin, trypsin inhibitor"/>
    <property type="match status" value="1"/>
</dbReference>
<dbReference type="HAMAP" id="MF_00706">
    <property type="entry name" value="Ecotin"/>
    <property type="match status" value="1"/>
</dbReference>
<dbReference type="InterPro" id="IPR027438">
    <property type="entry name" value="Ecotin_C"/>
</dbReference>
<dbReference type="InterPro" id="IPR036198">
    <property type="entry name" value="Ecotin_sf"/>
</dbReference>
<dbReference type="InterPro" id="IPR005658">
    <property type="entry name" value="Prot_inh_ecotin"/>
</dbReference>
<dbReference type="InterPro" id="IPR023084">
    <property type="entry name" value="Prot_inh_ecotin_gammaproteobac"/>
</dbReference>
<dbReference type="NCBIfam" id="NF002987">
    <property type="entry name" value="PRK03719.1"/>
    <property type="match status" value="1"/>
</dbReference>
<dbReference type="PANTHER" id="PTHR35890">
    <property type="match status" value="1"/>
</dbReference>
<dbReference type="PANTHER" id="PTHR35890:SF3">
    <property type="entry name" value="ECOTIN"/>
    <property type="match status" value="1"/>
</dbReference>
<dbReference type="Pfam" id="PF03974">
    <property type="entry name" value="Ecotin"/>
    <property type="match status" value="1"/>
</dbReference>
<dbReference type="PIRSF" id="PIRSF006865">
    <property type="entry name" value="Prot_inh_ecotin"/>
    <property type="match status" value="1"/>
</dbReference>
<dbReference type="SUPFAM" id="SSF49772">
    <property type="entry name" value="Ecotin, trypsin inhibitor"/>
    <property type="match status" value="1"/>
</dbReference>
<reference key="1">
    <citation type="journal article" date="2009" name="PLoS Genet.">
        <title>Organised genome dynamics in the Escherichia coli species results in highly diverse adaptive paths.</title>
        <authorList>
            <person name="Touchon M."/>
            <person name="Hoede C."/>
            <person name="Tenaillon O."/>
            <person name="Barbe V."/>
            <person name="Baeriswyl S."/>
            <person name="Bidet P."/>
            <person name="Bingen E."/>
            <person name="Bonacorsi S."/>
            <person name="Bouchier C."/>
            <person name="Bouvet O."/>
            <person name="Calteau A."/>
            <person name="Chiapello H."/>
            <person name="Clermont O."/>
            <person name="Cruveiller S."/>
            <person name="Danchin A."/>
            <person name="Diard M."/>
            <person name="Dossat C."/>
            <person name="Karoui M.E."/>
            <person name="Frapy E."/>
            <person name="Garry L."/>
            <person name="Ghigo J.M."/>
            <person name="Gilles A.M."/>
            <person name="Johnson J."/>
            <person name="Le Bouguenec C."/>
            <person name="Lescat M."/>
            <person name="Mangenot S."/>
            <person name="Martinez-Jehanne V."/>
            <person name="Matic I."/>
            <person name="Nassif X."/>
            <person name="Oztas S."/>
            <person name="Petit M.A."/>
            <person name="Pichon C."/>
            <person name="Rouy Z."/>
            <person name="Ruf C.S."/>
            <person name="Schneider D."/>
            <person name="Tourret J."/>
            <person name="Vacherie B."/>
            <person name="Vallenet D."/>
            <person name="Medigue C."/>
            <person name="Rocha E.P.C."/>
            <person name="Denamur E."/>
        </authorList>
    </citation>
    <scope>NUCLEOTIDE SEQUENCE [LARGE SCALE GENOMIC DNA]</scope>
    <source>
        <strain>S88 / ExPEC</strain>
    </source>
</reference>
<proteinExistence type="inferred from homology"/>
<sequence length="162" mass="18179">MKTILPAVLFAAFATTSAWAAESVQPLEKIAPYPQAEKGMKRQVIQLTPQEDESTLKVELLIGQTLEVDCNLHRLGGKLESKTLEGWGYDYYVFDKVSSPVSTMMACPDGKKEKKFVTAYLGDAGMLRYNSKLPIVVYTPDNVDVKYRIWKAEEKIDNAVVR</sequence>
<evidence type="ECO:0000255" key="1">
    <source>
        <dbReference type="HAMAP-Rule" id="MF_00706"/>
    </source>
</evidence>
<protein>
    <recommendedName>
        <fullName evidence="1">Ecotin</fullName>
    </recommendedName>
</protein>